<dbReference type="EMBL" id="X97824">
    <property type="protein sequence ID" value="CAA66403.1"/>
    <property type="molecule type" value="mRNA"/>
</dbReference>
<dbReference type="RefSeq" id="NP_001117190.1">
    <property type="nucleotide sequence ID" value="NM_001123718.1"/>
</dbReference>
<dbReference type="SMR" id="Q91482"/>
<dbReference type="STRING" id="8030.ENSSSAP00000001296"/>
<dbReference type="Allergome" id="3469">
    <property type="allergen name" value="Sal s 1.0101"/>
</dbReference>
<dbReference type="Allergome" id="619">
    <property type="allergen name" value="Sal s 1"/>
</dbReference>
<dbReference type="PaxDb" id="8030-ENSSSAP00000001296"/>
<dbReference type="GeneID" id="100137051"/>
<dbReference type="KEGG" id="sasa:100137051"/>
<dbReference type="OrthoDB" id="536284at7898"/>
<dbReference type="Proteomes" id="UP000087266">
    <property type="component" value="Chromosome ssa06"/>
</dbReference>
<dbReference type="GO" id="GO:0005737">
    <property type="term" value="C:cytoplasm"/>
    <property type="evidence" value="ECO:0007669"/>
    <property type="project" value="TreeGrafter"/>
</dbReference>
<dbReference type="GO" id="GO:0005509">
    <property type="term" value="F:calcium ion binding"/>
    <property type="evidence" value="ECO:0007669"/>
    <property type="project" value="InterPro"/>
</dbReference>
<dbReference type="CDD" id="cd16255">
    <property type="entry name" value="EFh_parvalbumin_beta"/>
    <property type="match status" value="1"/>
</dbReference>
<dbReference type="FunFam" id="1.10.238.10:FF:000060">
    <property type="entry name" value="Parvalbumin, thymic"/>
    <property type="match status" value="1"/>
</dbReference>
<dbReference type="Gene3D" id="1.10.238.10">
    <property type="entry name" value="EF-hand"/>
    <property type="match status" value="1"/>
</dbReference>
<dbReference type="InterPro" id="IPR011992">
    <property type="entry name" value="EF-hand-dom_pair"/>
</dbReference>
<dbReference type="InterPro" id="IPR018247">
    <property type="entry name" value="EF_Hand_1_Ca_BS"/>
</dbReference>
<dbReference type="InterPro" id="IPR002048">
    <property type="entry name" value="EF_hand_dom"/>
</dbReference>
<dbReference type="InterPro" id="IPR008080">
    <property type="entry name" value="Parvalbumin"/>
</dbReference>
<dbReference type="PANTHER" id="PTHR11653:SF12">
    <property type="entry name" value="PARVALBUMIN"/>
    <property type="match status" value="1"/>
</dbReference>
<dbReference type="PANTHER" id="PTHR11653">
    <property type="entry name" value="PARVALBUMIN ALPHA"/>
    <property type="match status" value="1"/>
</dbReference>
<dbReference type="Pfam" id="PF13499">
    <property type="entry name" value="EF-hand_7"/>
    <property type="match status" value="1"/>
</dbReference>
<dbReference type="PRINTS" id="PR01697">
    <property type="entry name" value="PARVALBUMIN"/>
</dbReference>
<dbReference type="SMART" id="SM00054">
    <property type="entry name" value="EFh"/>
    <property type="match status" value="2"/>
</dbReference>
<dbReference type="SUPFAM" id="SSF47473">
    <property type="entry name" value="EF-hand"/>
    <property type="match status" value="1"/>
</dbReference>
<dbReference type="PROSITE" id="PS00018">
    <property type="entry name" value="EF_HAND_1"/>
    <property type="match status" value="2"/>
</dbReference>
<dbReference type="PROSITE" id="PS50222">
    <property type="entry name" value="EF_HAND_2"/>
    <property type="match status" value="2"/>
</dbReference>
<feature type="chain" id="PRO_0000073619" description="Parvalbumin beta 1">
    <location>
        <begin position="1"/>
        <end position="109"/>
    </location>
</feature>
<feature type="domain" description="EF-hand 1" evidence="3">
    <location>
        <begin position="39"/>
        <end position="74"/>
    </location>
</feature>
<feature type="domain" description="EF-hand 2" evidence="3">
    <location>
        <begin position="78"/>
        <end position="109"/>
    </location>
</feature>
<feature type="binding site" evidence="2 3">
    <location>
        <position position="52"/>
    </location>
    <ligand>
        <name>Ca(2+)</name>
        <dbReference type="ChEBI" id="CHEBI:29108"/>
        <label>1</label>
    </ligand>
</feature>
<feature type="binding site" evidence="2 3">
    <location>
        <position position="54"/>
    </location>
    <ligand>
        <name>Ca(2+)</name>
        <dbReference type="ChEBI" id="CHEBI:29108"/>
        <label>1</label>
    </ligand>
</feature>
<feature type="binding site" evidence="2 3">
    <location>
        <position position="56"/>
    </location>
    <ligand>
        <name>Ca(2+)</name>
        <dbReference type="ChEBI" id="CHEBI:29108"/>
        <label>1</label>
    </ligand>
</feature>
<feature type="binding site" evidence="2">
    <location>
        <position position="58"/>
    </location>
    <ligand>
        <name>Ca(2+)</name>
        <dbReference type="ChEBI" id="CHEBI:29108"/>
        <label>1</label>
    </ligand>
</feature>
<feature type="binding site" evidence="2">
    <location>
        <position position="60"/>
    </location>
    <ligand>
        <name>Ca(2+)</name>
        <dbReference type="ChEBI" id="CHEBI:29108"/>
        <label>1</label>
    </ligand>
</feature>
<feature type="binding site" evidence="2 3">
    <location>
        <position position="63"/>
    </location>
    <ligand>
        <name>Ca(2+)</name>
        <dbReference type="ChEBI" id="CHEBI:29108"/>
        <label>1</label>
    </ligand>
</feature>
<feature type="binding site" evidence="2 3">
    <location>
        <position position="91"/>
    </location>
    <ligand>
        <name>Ca(2+)</name>
        <dbReference type="ChEBI" id="CHEBI:29108"/>
        <label>2</label>
    </ligand>
</feature>
<feature type="binding site" evidence="2 3">
    <location>
        <position position="93"/>
    </location>
    <ligand>
        <name>Ca(2+)</name>
        <dbReference type="ChEBI" id="CHEBI:29108"/>
        <label>2</label>
    </ligand>
</feature>
<feature type="binding site" evidence="2 3">
    <location>
        <position position="95"/>
    </location>
    <ligand>
        <name>Ca(2+)</name>
        <dbReference type="ChEBI" id="CHEBI:29108"/>
        <label>2</label>
    </ligand>
</feature>
<feature type="binding site" evidence="3">
    <location>
        <position position="97"/>
    </location>
    <ligand>
        <name>Ca(2+)</name>
        <dbReference type="ChEBI" id="CHEBI:29108"/>
        <label>2</label>
    </ligand>
</feature>
<feature type="binding site" evidence="2 3">
    <location>
        <position position="102"/>
    </location>
    <ligand>
        <name>Ca(2+)</name>
        <dbReference type="ChEBI" id="CHEBI:29108"/>
        <label>2</label>
    </ligand>
</feature>
<evidence type="ECO:0000250" key="1"/>
<evidence type="ECO:0000250" key="2">
    <source>
        <dbReference type="UniProtKB" id="P02621"/>
    </source>
</evidence>
<evidence type="ECO:0000255" key="3">
    <source>
        <dbReference type="PROSITE-ProRule" id="PRU00448"/>
    </source>
</evidence>
<evidence type="ECO:0000305" key="4"/>
<accession>Q91482</accession>
<proteinExistence type="evidence at protein level"/>
<protein>
    <recommendedName>
        <fullName>Parvalbumin beta 1</fullName>
    </recommendedName>
    <alternativeName>
        <fullName>Major allergen Sal s 1</fullName>
    </alternativeName>
    <allergenName>Sal s 1</allergenName>
</protein>
<comment type="function">
    <text evidence="1">In muscle, parvalbumin is thought to be involved in relaxation after contraction. It binds two calcium ions (By similarity).</text>
</comment>
<comment type="allergen">
    <text>Causes an allergic reaction in human.</text>
</comment>
<comment type="similarity">
    <text evidence="4">Belongs to the parvalbumin family.</text>
</comment>
<organism>
    <name type="scientific">Salmo salar</name>
    <name type="common">Atlantic salmon</name>
    <dbReference type="NCBI Taxonomy" id="8030"/>
    <lineage>
        <taxon>Eukaryota</taxon>
        <taxon>Metazoa</taxon>
        <taxon>Chordata</taxon>
        <taxon>Craniata</taxon>
        <taxon>Vertebrata</taxon>
        <taxon>Euteleostomi</taxon>
        <taxon>Actinopterygii</taxon>
        <taxon>Neopterygii</taxon>
        <taxon>Teleostei</taxon>
        <taxon>Protacanthopterygii</taxon>
        <taxon>Salmoniformes</taxon>
        <taxon>Salmonidae</taxon>
        <taxon>Salmoninae</taxon>
        <taxon>Salmo</taxon>
    </lineage>
</organism>
<reference key="1">
    <citation type="journal article" date="1996" name="Scand. J. Immunol.">
        <title>Cloning of two distinct cDNAs encoding parvalbumin, the major allergen of Atlantic salmon (Salmo salar).</title>
        <authorList>
            <person name="Lindstroem C.D.-V."/>
            <person name="van Do T."/>
            <person name="Hordvik I."/>
            <person name="Endresen C."/>
            <person name="Elsayed S."/>
        </authorList>
    </citation>
    <scope>NUCLEOTIDE SEQUENCE [MRNA]</scope>
    <source>
        <tissue>Muscle</tissue>
    </source>
</reference>
<name>PRVB1_SALSA</name>
<keyword id="KW-0020">Allergen</keyword>
<keyword id="KW-0106">Calcium</keyword>
<keyword id="KW-0479">Metal-binding</keyword>
<keyword id="KW-0514">Muscle protein</keyword>
<keyword id="KW-1185">Reference proteome</keyword>
<keyword id="KW-0677">Repeat</keyword>
<sequence>MACAHLCKEADIKTALEACKAADTFSFKTFFHTIGFASKSADDVKKAFKVIDQDASGFIEVEELKLFLQNFCPKARELTDAETKAFLKAGDADGDGMIGIDEFAVLVKQ</sequence>